<protein>
    <recommendedName>
        <fullName>Putative zinc-binding protein ORF11</fullName>
    </recommendedName>
</protein>
<proteinExistence type="predicted"/>
<gene>
    <name type="primary">ORF11</name>
</gene>
<sequence>MRCIRAAPADDGPYTPIIMSPVFPCCFCQGEAVFPSNRASCKHVFCFFCTPRECPECGSGGGRKLIPNEYLYALTAKPFPPAPMGRTAGFWLMGPNGGWHVEPRVVVLEDLLTAVIITVGALVETRGAPEGAVRVRARGKWEGAIALPLPLLDDLVELGGAIEAAGGKVAVGGFLVRTLYELVVRYHDTLAKTFPVMAPRFGSLGALKELLSRFRIPGYFGSGTPRYDGLLGHIACEIRKCCDPPGIGFPNPFRAFLNRKNRHKRTGGATGSPFTDPPTGH</sequence>
<organismHost>
    <name type="scientific">Ictaluridae</name>
    <name type="common">bullhead catfishes</name>
    <dbReference type="NCBI Taxonomy" id="7996"/>
</organismHost>
<reference key="1">
    <citation type="journal article" date="1992" name="Virology">
        <title>Channel catfish virus: a new type of herpesvirus.</title>
        <authorList>
            <person name="Davison A.J."/>
        </authorList>
    </citation>
    <scope>NUCLEOTIDE SEQUENCE [LARGE SCALE GENOMIC DNA]</scope>
</reference>
<accession>Q00164</accession>
<feature type="chain" id="PRO_0000222097" description="Putative zinc-binding protein ORF11">
    <location>
        <begin position="1"/>
        <end position="281"/>
    </location>
</feature>
<dbReference type="EMBL" id="M75136">
    <property type="protein sequence ID" value="AAA88192.1"/>
    <property type="molecule type" value="Genomic_DNA"/>
</dbReference>
<dbReference type="EMBL" id="M75136">
    <property type="protein sequence ID" value="AAA88114.1"/>
    <property type="molecule type" value="Genomic_DNA"/>
</dbReference>
<dbReference type="PIR" id="C36787">
    <property type="entry name" value="ZBBEI2"/>
</dbReference>
<dbReference type="KEGG" id="vg:1488369"/>
<dbReference type="KEGG" id="vg:1488393"/>
<dbReference type="Proteomes" id="UP000007643">
    <property type="component" value="Segment"/>
</dbReference>
<dbReference type="GO" id="GO:0008270">
    <property type="term" value="F:zinc ion binding"/>
    <property type="evidence" value="ECO:0007669"/>
    <property type="project" value="UniProtKB-KW"/>
</dbReference>
<organism>
    <name type="scientific">Ictalurid herpesvirus 1 (strain Auburn)</name>
    <name type="common">IcHV-1</name>
    <name type="synonym">Channel catfish herpesvirus</name>
    <dbReference type="NCBI Taxonomy" id="766178"/>
    <lineage>
        <taxon>Viruses</taxon>
        <taxon>Duplodnaviria</taxon>
        <taxon>Heunggongvirae</taxon>
        <taxon>Peploviricota</taxon>
        <taxon>Herviviricetes</taxon>
        <taxon>Herpesvirales</taxon>
        <taxon>Alloherpesviridae</taxon>
        <taxon>Ictavirus</taxon>
        <taxon>Ictavirus ictaluridallo1</taxon>
        <taxon>Ictalurid herpesvirus 1</taxon>
    </lineage>
</organism>
<name>VG11_ICHVA</name>
<keyword id="KW-0479">Metal-binding</keyword>
<keyword id="KW-1185">Reference proteome</keyword>
<keyword id="KW-0862">Zinc</keyword>
<keyword id="KW-0863">Zinc-finger</keyword>